<gene>
    <name evidence="1" type="primary">uppS</name>
</gene>
<accession>Q8GDY3</accession>
<sequence>MPRRLWPFGQTKTSADEQALSEQIDPHRIPKHIAIIMDGNGRWAKRRGLPRVAGHRAGVESLRRVLEVCEDYNIAYLTVYAFSTENWKRPADEVNALFDLLVEYLHRELNTLHSKGVRIRAIGKIEDLPGGPRRELEKAIAKTANNTRLVLNVALNYGGRFEIVEAVKSIARLAAEGKVNPDQIDEKYMSQYLYTADVPDPDLLIRPSGELRLSNFLLWQSAYTEIWVTPTLWPDFGRKEMVQAIVDYQGRDRRFGGVKV</sequence>
<name>ISPT_HELMO</name>
<reference key="1">
    <citation type="journal article" date="2002" name="Science">
        <title>Whole-genome analysis of photosynthetic prokaryotes.</title>
        <authorList>
            <person name="Raymond J."/>
            <person name="Zhaxybayeva O."/>
            <person name="Gogarten J.P."/>
            <person name="Gerdes S.Y."/>
            <person name="Blankenship R.E."/>
        </authorList>
    </citation>
    <scope>NUCLEOTIDE SEQUENCE [GENOMIC DNA]</scope>
</reference>
<protein>
    <recommendedName>
        <fullName evidence="1">Isoprenyl transferase</fullName>
        <ecNumber evidence="1">2.5.1.-</ecNumber>
    </recommendedName>
</protein>
<proteinExistence type="inferred from homology"/>
<keyword id="KW-0460">Magnesium</keyword>
<keyword id="KW-0479">Metal-binding</keyword>
<keyword id="KW-0808">Transferase</keyword>
<organism>
    <name type="scientific">Heliobacterium mobile</name>
    <name type="common">Heliobacillus mobilis</name>
    <dbReference type="NCBI Taxonomy" id="28064"/>
    <lineage>
        <taxon>Bacteria</taxon>
        <taxon>Bacillati</taxon>
        <taxon>Bacillota</taxon>
        <taxon>Clostridia</taxon>
        <taxon>Eubacteriales</taxon>
        <taxon>Heliobacteriaceae</taxon>
        <taxon>Heliobacterium</taxon>
    </lineage>
</organism>
<feature type="chain" id="PRO_0000123621" description="Isoprenyl transferase">
    <location>
        <begin position="1"/>
        <end position="260"/>
    </location>
</feature>
<feature type="active site" evidence="1">
    <location>
        <position position="38"/>
    </location>
</feature>
<feature type="active site" description="Proton acceptor" evidence="1">
    <location>
        <position position="86"/>
    </location>
</feature>
<feature type="binding site" evidence="1">
    <location>
        <position position="38"/>
    </location>
    <ligand>
        <name>Mg(2+)</name>
        <dbReference type="ChEBI" id="CHEBI:18420"/>
    </ligand>
</feature>
<feature type="binding site" evidence="1">
    <location>
        <begin position="39"/>
        <end position="42"/>
    </location>
    <ligand>
        <name>substrate</name>
    </ligand>
</feature>
<feature type="binding site" evidence="1">
    <location>
        <position position="43"/>
    </location>
    <ligand>
        <name>substrate</name>
    </ligand>
</feature>
<feature type="binding site" evidence="1">
    <location>
        <position position="51"/>
    </location>
    <ligand>
        <name>substrate</name>
    </ligand>
</feature>
<feature type="binding site" evidence="1">
    <location>
        <position position="55"/>
    </location>
    <ligand>
        <name>substrate</name>
    </ligand>
</feature>
<feature type="binding site" evidence="1">
    <location>
        <begin position="83"/>
        <end position="85"/>
    </location>
    <ligand>
        <name>substrate</name>
    </ligand>
</feature>
<feature type="binding site" evidence="1">
    <location>
        <position position="87"/>
    </location>
    <ligand>
        <name>substrate</name>
    </ligand>
</feature>
<feature type="binding site" evidence="1">
    <location>
        <position position="89"/>
    </location>
    <ligand>
        <name>substrate</name>
    </ligand>
</feature>
<feature type="binding site" evidence="1">
    <location>
        <position position="206"/>
    </location>
    <ligand>
        <name>substrate</name>
    </ligand>
</feature>
<feature type="binding site" evidence="1">
    <location>
        <begin position="212"/>
        <end position="214"/>
    </location>
    <ligand>
        <name>substrate</name>
    </ligand>
</feature>
<feature type="binding site" evidence="1">
    <location>
        <position position="225"/>
    </location>
    <ligand>
        <name>Mg(2+)</name>
        <dbReference type="ChEBI" id="CHEBI:18420"/>
    </ligand>
</feature>
<evidence type="ECO:0000255" key="1">
    <source>
        <dbReference type="HAMAP-Rule" id="MF_01139"/>
    </source>
</evidence>
<comment type="function">
    <text evidence="1">Catalyzes the condensation of isopentenyl diphosphate (IPP) with allylic pyrophosphates generating different type of terpenoids.</text>
</comment>
<comment type="cofactor">
    <cofactor evidence="1">
        <name>Mg(2+)</name>
        <dbReference type="ChEBI" id="CHEBI:18420"/>
    </cofactor>
    <text evidence="1">Binds 2 magnesium ions per subunit.</text>
</comment>
<comment type="subunit">
    <text evidence="1">Homodimer.</text>
</comment>
<comment type="similarity">
    <text evidence="1">Belongs to the UPP synthase family.</text>
</comment>
<dbReference type="EC" id="2.5.1.-" evidence="1"/>
<dbReference type="EMBL" id="AY142839">
    <property type="protein sequence ID" value="AAN87443.1"/>
    <property type="molecule type" value="Genomic_DNA"/>
</dbReference>
<dbReference type="RefSeq" id="WP_155474890.1">
    <property type="nucleotide sequence ID" value="NZ_WNKU01000001.1"/>
</dbReference>
<dbReference type="SMR" id="Q8GDY3"/>
<dbReference type="OrthoDB" id="4191603at2"/>
<dbReference type="GO" id="GO:0045547">
    <property type="term" value="F:ditrans,polycis-polyprenyl diphosphate synthase [(2E,6E)-farnesyl diphosphate specific] activity"/>
    <property type="evidence" value="ECO:0007669"/>
    <property type="project" value="TreeGrafter"/>
</dbReference>
<dbReference type="GO" id="GO:0000287">
    <property type="term" value="F:magnesium ion binding"/>
    <property type="evidence" value="ECO:0007669"/>
    <property type="project" value="UniProtKB-UniRule"/>
</dbReference>
<dbReference type="GO" id="GO:0016094">
    <property type="term" value="P:polyprenol biosynthetic process"/>
    <property type="evidence" value="ECO:0007669"/>
    <property type="project" value="TreeGrafter"/>
</dbReference>
<dbReference type="CDD" id="cd00475">
    <property type="entry name" value="Cis_IPPS"/>
    <property type="match status" value="1"/>
</dbReference>
<dbReference type="FunFam" id="3.40.1180.10:FF:000001">
    <property type="entry name" value="(2E,6E)-farnesyl-diphosphate-specific ditrans,polycis-undecaprenyl-diphosphate synthase"/>
    <property type="match status" value="1"/>
</dbReference>
<dbReference type="Gene3D" id="3.40.1180.10">
    <property type="entry name" value="Decaprenyl diphosphate synthase-like"/>
    <property type="match status" value="1"/>
</dbReference>
<dbReference type="HAMAP" id="MF_01139">
    <property type="entry name" value="ISPT"/>
    <property type="match status" value="1"/>
</dbReference>
<dbReference type="InterPro" id="IPR001441">
    <property type="entry name" value="UPP_synth-like"/>
</dbReference>
<dbReference type="InterPro" id="IPR018520">
    <property type="entry name" value="UPP_synth-like_CS"/>
</dbReference>
<dbReference type="InterPro" id="IPR036424">
    <property type="entry name" value="UPP_synth-like_sf"/>
</dbReference>
<dbReference type="NCBIfam" id="NF011405">
    <property type="entry name" value="PRK14830.1"/>
    <property type="match status" value="1"/>
</dbReference>
<dbReference type="NCBIfam" id="TIGR00055">
    <property type="entry name" value="uppS"/>
    <property type="match status" value="1"/>
</dbReference>
<dbReference type="PANTHER" id="PTHR10291:SF0">
    <property type="entry name" value="DEHYDRODOLICHYL DIPHOSPHATE SYNTHASE 2"/>
    <property type="match status" value="1"/>
</dbReference>
<dbReference type="PANTHER" id="PTHR10291">
    <property type="entry name" value="DEHYDRODOLICHYL DIPHOSPHATE SYNTHASE FAMILY MEMBER"/>
    <property type="match status" value="1"/>
</dbReference>
<dbReference type="Pfam" id="PF01255">
    <property type="entry name" value="Prenyltransf"/>
    <property type="match status" value="1"/>
</dbReference>
<dbReference type="SUPFAM" id="SSF64005">
    <property type="entry name" value="Undecaprenyl diphosphate synthase"/>
    <property type="match status" value="1"/>
</dbReference>
<dbReference type="PROSITE" id="PS01066">
    <property type="entry name" value="UPP_SYNTHASE"/>
    <property type="match status" value="1"/>
</dbReference>